<organism>
    <name type="scientific">Xenopus tropicalis</name>
    <name type="common">Western clawed frog</name>
    <name type="synonym">Silurana tropicalis</name>
    <dbReference type="NCBI Taxonomy" id="8364"/>
    <lineage>
        <taxon>Eukaryota</taxon>
        <taxon>Metazoa</taxon>
        <taxon>Chordata</taxon>
        <taxon>Craniata</taxon>
        <taxon>Vertebrata</taxon>
        <taxon>Euteleostomi</taxon>
        <taxon>Amphibia</taxon>
        <taxon>Batrachia</taxon>
        <taxon>Anura</taxon>
        <taxon>Pipoidea</taxon>
        <taxon>Pipidae</taxon>
        <taxon>Xenopodinae</taxon>
        <taxon>Xenopus</taxon>
        <taxon>Silurana</taxon>
    </lineage>
</organism>
<evidence type="ECO:0000250" key="1">
    <source>
        <dbReference type="UniProtKB" id="Q4V7K4"/>
    </source>
</evidence>
<evidence type="ECO:0000256" key="2">
    <source>
        <dbReference type="SAM" id="MobiDB-lite"/>
    </source>
</evidence>
<evidence type="ECO:0000305" key="3"/>
<proteinExistence type="evidence at transcript level"/>
<protein>
    <recommendedName>
        <fullName>Protein PAT1 homolog 2</fullName>
    </recommendedName>
    <alternativeName>
        <fullName>PAT1-like protein 2</fullName>
    </alternativeName>
    <alternativeName>
        <fullName>Protein PAT1 homolog a</fullName>
        <shortName>Pat1a</shortName>
    </alternativeName>
</protein>
<dbReference type="EMBL" id="BC168606">
    <property type="protein sequence ID" value="AAI68606.1"/>
    <property type="molecule type" value="mRNA"/>
</dbReference>
<dbReference type="RefSeq" id="NP_001135679.1">
    <property type="nucleotide sequence ID" value="NM_001142207.1"/>
</dbReference>
<dbReference type="RefSeq" id="XP_012812030.1">
    <property type="nucleotide sequence ID" value="XM_012956576.2"/>
</dbReference>
<dbReference type="RefSeq" id="XP_012812031.1">
    <property type="nucleotide sequence ID" value="XM_012956577.3"/>
</dbReference>
<dbReference type="SMR" id="B5DEB9"/>
<dbReference type="FunCoup" id="B5DEB9">
    <property type="interactions" value="1228"/>
</dbReference>
<dbReference type="STRING" id="8364.ENSXETP00000035440"/>
<dbReference type="GeneID" id="100216240"/>
<dbReference type="KEGG" id="xtr:100216240"/>
<dbReference type="AGR" id="Xenbase:XB-GENE-5892251"/>
<dbReference type="CTD" id="197135"/>
<dbReference type="Xenbase" id="XB-GENE-5892251">
    <property type="gene designation" value="patl2"/>
</dbReference>
<dbReference type="InParanoid" id="B5DEB9"/>
<dbReference type="OMA" id="YQRPFED"/>
<dbReference type="OrthoDB" id="8251691at2759"/>
<dbReference type="Proteomes" id="UP000008143">
    <property type="component" value="Chromosome 2"/>
</dbReference>
<dbReference type="Bgee" id="ENSXETG00000014167">
    <property type="expression patterns" value="Expressed in ovary and 8 other cell types or tissues"/>
</dbReference>
<dbReference type="ExpressionAtlas" id="B5DEB9">
    <property type="expression patterns" value="baseline"/>
</dbReference>
<dbReference type="GO" id="GO:0005737">
    <property type="term" value="C:cytoplasm"/>
    <property type="evidence" value="ECO:0000250"/>
    <property type="project" value="UniProtKB"/>
</dbReference>
<dbReference type="GO" id="GO:0005634">
    <property type="term" value="C:nucleus"/>
    <property type="evidence" value="ECO:0000250"/>
    <property type="project" value="UniProtKB"/>
</dbReference>
<dbReference type="GO" id="GO:0003723">
    <property type="term" value="F:RNA binding"/>
    <property type="evidence" value="ECO:0000250"/>
    <property type="project" value="UniProtKB"/>
</dbReference>
<dbReference type="GO" id="GO:0000290">
    <property type="term" value="P:deadenylation-dependent decapping of nuclear-transcribed mRNA"/>
    <property type="evidence" value="ECO:0007669"/>
    <property type="project" value="InterPro"/>
</dbReference>
<dbReference type="GO" id="GO:0017148">
    <property type="term" value="P:negative regulation of translation"/>
    <property type="evidence" value="ECO:0000250"/>
    <property type="project" value="UniProtKB"/>
</dbReference>
<dbReference type="InterPro" id="IPR039900">
    <property type="entry name" value="Pat1-like"/>
</dbReference>
<dbReference type="InterPro" id="IPR019167">
    <property type="entry name" value="PAT1_dom"/>
</dbReference>
<dbReference type="PANTHER" id="PTHR21551:SF3">
    <property type="entry name" value="PROTEIN PAT1 HOMOLOG 2"/>
    <property type="match status" value="1"/>
</dbReference>
<dbReference type="PANTHER" id="PTHR21551">
    <property type="entry name" value="TOPOISOMERASE II-ASSOCIATED PROTEIN PAT1"/>
    <property type="match status" value="1"/>
</dbReference>
<dbReference type="Pfam" id="PF09770">
    <property type="entry name" value="PAT1"/>
    <property type="match status" value="1"/>
</dbReference>
<gene>
    <name type="primary">patl2</name>
</gene>
<name>PATL2_XENTR</name>
<feature type="chain" id="PRO_0000404580" description="Protein PAT1 homolog 2">
    <location>
        <begin position="1"/>
        <end position="735"/>
    </location>
</feature>
<feature type="region of interest" description="Disordered" evidence="2">
    <location>
        <begin position="39"/>
        <end position="93"/>
    </location>
</feature>
<feature type="region of interest" description="Disordered" evidence="2">
    <location>
        <begin position="336"/>
        <end position="366"/>
    </location>
</feature>
<feature type="compositionally biased region" description="Basic and acidic residues" evidence="2">
    <location>
        <begin position="49"/>
        <end position="59"/>
    </location>
</feature>
<feature type="compositionally biased region" description="Basic and acidic residues" evidence="2">
    <location>
        <begin position="67"/>
        <end position="93"/>
    </location>
</feature>
<feature type="compositionally biased region" description="Low complexity" evidence="2">
    <location>
        <begin position="346"/>
        <end position="356"/>
    </location>
</feature>
<reference key="1">
    <citation type="submission" date="2008-08" db="EMBL/GenBank/DDBJ databases">
        <authorList>
            <consortium name="NIH - Xenopus Gene Collection (XGC) project"/>
        </authorList>
    </citation>
    <scope>NUCLEOTIDE SEQUENCE [LARGE SCALE MRNA]</scope>
    <source>
        <tissue>Embryo</tissue>
    </source>
</reference>
<keyword id="KW-0963">Cytoplasm</keyword>
<keyword id="KW-0539">Nucleus</keyword>
<keyword id="KW-1185">Reference proteome</keyword>
<keyword id="KW-0694">RNA-binding</keyword>
<comment type="function">
    <text evidence="1">RNA-binding protein that acts as a translational repressor.</text>
</comment>
<comment type="subunit">
    <text evidence="1">Interacts with ribonucleoprotein complex components. Interacts with cpeb (By similarity).</text>
</comment>
<comment type="subcellular location">
    <subcellularLocation>
        <location evidence="1">Cytoplasm</location>
    </subcellularLocation>
    <subcellularLocation>
        <location evidence="1">Nucleus</location>
    </subcellularLocation>
</comment>
<comment type="similarity">
    <text evidence="3">Belongs to the PAT1 family.</text>
</comment>
<accession>B5DEB9</accession>
<sequence length="735" mass="83746">MDLGSDQLLPEDYFLAEEGALLEEMAEEDEEIDLYNEVTFGLDQESDEEPTKQEEDHKKPVQIPEAPKIEEPEKPQPIKETKKPEKSPLREVKIVVESDEEHVDRSIDSGGHTMNSTMDDSELGDPAVMRAFHGKPTLESLDSAVVDSGIGSTWSELDTDYDQSGMDSGLWEASPKVSMSATGQILEDKAILRVMERAPYLPPANLEFLGSPLQRGFMPSQRLQRPEMGVMSPKPYRPRFMRQQSPLVPRSMRPPFPFTPPRRGPPIFTPNQSPGFVSQTPFRPMSPNVSTPTRPMTPKMVRMHFGPMSPSPSFSPFFSPMGNALQRFKVPGHVTQLHPQHRRILSQRQRPQSSSRKQWESRPDPYASLMSQKEKEWVIKLQMIQLQSENPHLDDYYYQAYYEKLERKLAEEELLGERKKREPTKLVTPYIQKAEMYESVVHIEGSLGQVAVSTCYSPRRAIDAVSYAMPDEAIKALGYQRLRVLKHTEKVFLLLLEVEELARKMSHIPEEEHAHFQHKQNYKVQRIYDILNMAPCHSEDESENEFLQLLQVGKGKKLIARLLPFLTRVQAGKILLLVVQHLPFLIKNDSAEESLSVLYGPLKNIINGLSFTELIGVIQELTRPLPESSDLPLTLAFQNQFGISLLYCLLSHGERLLSSDMPMEPCIGDFEKWTDTVFLVAKELSHVSKSSMVEPLFLPSNLLSLFCRYLDKQTIHKLEDKMECPAIPPYTAVPS</sequence>